<reference key="1">
    <citation type="submission" date="2007-05" db="EMBL/GenBank/DDBJ databases">
        <title>Complete sequence of chromosome of Acidiphilium cryptum JF-5.</title>
        <authorList>
            <consortium name="US DOE Joint Genome Institute"/>
            <person name="Copeland A."/>
            <person name="Lucas S."/>
            <person name="Lapidus A."/>
            <person name="Barry K."/>
            <person name="Detter J.C."/>
            <person name="Glavina del Rio T."/>
            <person name="Hammon N."/>
            <person name="Israni S."/>
            <person name="Dalin E."/>
            <person name="Tice H."/>
            <person name="Pitluck S."/>
            <person name="Sims D."/>
            <person name="Brettin T."/>
            <person name="Bruce D."/>
            <person name="Han C."/>
            <person name="Schmutz J."/>
            <person name="Larimer F."/>
            <person name="Land M."/>
            <person name="Hauser L."/>
            <person name="Kyrpides N."/>
            <person name="Kim E."/>
            <person name="Magnuson T."/>
            <person name="Richardson P."/>
        </authorList>
    </citation>
    <scope>NUCLEOTIDE SEQUENCE [LARGE SCALE GENOMIC DNA]</scope>
    <source>
        <strain>JF-5</strain>
    </source>
</reference>
<feature type="chain" id="PRO_0000318213" description="Protein-export protein SecB">
    <location>
        <begin position="1"/>
        <end position="166"/>
    </location>
</feature>
<evidence type="ECO:0000255" key="1">
    <source>
        <dbReference type="HAMAP-Rule" id="MF_00821"/>
    </source>
</evidence>
<keyword id="KW-0143">Chaperone</keyword>
<keyword id="KW-0963">Cytoplasm</keyword>
<keyword id="KW-0653">Protein transport</keyword>
<keyword id="KW-1185">Reference proteome</keyword>
<keyword id="KW-0811">Translocation</keyword>
<keyword id="KW-0813">Transport</keyword>
<organism>
    <name type="scientific">Acidiphilium cryptum (strain JF-5)</name>
    <dbReference type="NCBI Taxonomy" id="349163"/>
    <lineage>
        <taxon>Bacteria</taxon>
        <taxon>Pseudomonadati</taxon>
        <taxon>Pseudomonadota</taxon>
        <taxon>Alphaproteobacteria</taxon>
        <taxon>Acetobacterales</taxon>
        <taxon>Acidocellaceae</taxon>
        <taxon>Acidiphilium</taxon>
    </lineage>
</organism>
<name>SECB_ACICJ</name>
<comment type="function">
    <text evidence="1">One of the proteins required for the normal export of preproteins out of the cell cytoplasm. It is a molecular chaperone that binds to a subset of precursor proteins, maintaining them in a translocation-competent state. It also specifically binds to its receptor SecA.</text>
</comment>
<comment type="subunit">
    <text evidence="1">Homotetramer, a dimer of dimers. One homotetramer interacts with 1 SecA dimer.</text>
</comment>
<comment type="subcellular location">
    <subcellularLocation>
        <location evidence="1">Cytoplasm</location>
    </subcellularLocation>
</comment>
<comment type="similarity">
    <text evidence="1">Belongs to the SecB family.</text>
</comment>
<gene>
    <name evidence="1" type="primary">secB</name>
    <name type="ordered locus">Acry_1788</name>
</gene>
<sequence>MSETQIAPLTLNIQYTKDLSFEVPGAPAIYTLLRQAPTVNINLDVQVQRLQDDAHVYEVTLTTRAEATHPAPAESGNGAEGGKDLTVFIADLSYAGVFTLTGIPDNQIEPVLLVECPRLLFPFARNILADVTRDGGFPPVMLGPVDFVGLWQARRAQDDGETIANA</sequence>
<accession>A5FZF9</accession>
<dbReference type="EMBL" id="CP000697">
    <property type="protein sequence ID" value="ABQ30991.1"/>
    <property type="molecule type" value="Genomic_DNA"/>
</dbReference>
<dbReference type="RefSeq" id="WP_007422190.1">
    <property type="nucleotide sequence ID" value="NC_009484.1"/>
</dbReference>
<dbReference type="SMR" id="A5FZF9"/>
<dbReference type="STRING" id="349163.Acry_1788"/>
<dbReference type="KEGG" id="acr:Acry_1788"/>
<dbReference type="eggNOG" id="COG1952">
    <property type="taxonomic scope" value="Bacteria"/>
</dbReference>
<dbReference type="HOGENOM" id="CLU_111574_0_0_5"/>
<dbReference type="Proteomes" id="UP000000245">
    <property type="component" value="Chromosome"/>
</dbReference>
<dbReference type="GO" id="GO:0005737">
    <property type="term" value="C:cytoplasm"/>
    <property type="evidence" value="ECO:0007669"/>
    <property type="project" value="UniProtKB-SubCell"/>
</dbReference>
<dbReference type="GO" id="GO:0051082">
    <property type="term" value="F:unfolded protein binding"/>
    <property type="evidence" value="ECO:0007669"/>
    <property type="project" value="InterPro"/>
</dbReference>
<dbReference type="GO" id="GO:0006457">
    <property type="term" value="P:protein folding"/>
    <property type="evidence" value="ECO:0007669"/>
    <property type="project" value="UniProtKB-UniRule"/>
</dbReference>
<dbReference type="GO" id="GO:0051262">
    <property type="term" value="P:protein tetramerization"/>
    <property type="evidence" value="ECO:0007669"/>
    <property type="project" value="InterPro"/>
</dbReference>
<dbReference type="GO" id="GO:0015031">
    <property type="term" value="P:protein transport"/>
    <property type="evidence" value="ECO:0007669"/>
    <property type="project" value="UniProtKB-UniRule"/>
</dbReference>
<dbReference type="Gene3D" id="3.10.420.10">
    <property type="entry name" value="SecB-like"/>
    <property type="match status" value="1"/>
</dbReference>
<dbReference type="HAMAP" id="MF_00821">
    <property type="entry name" value="SecB"/>
    <property type="match status" value="1"/>
</dbReference>
<dbReference type="InterPro" id="IPR003708">
    <property type="entry name" value="SecB"/>
</dbReference>
<dbReference type="InterPro" id="IPR035958">
    <property type="entry name" value="SecB-like_sf"/>
</dbReference>
<dbReference type="NCBIfam" id="NF004392">
    <property type="entry name" value="PRK05751.1-3"/>
    <property type="match status" value="1"/>
</dbReference>
<dbReference type="NCBIfam" id="TIGR00809">
    <property type="entry name" value="secB"/>
    <property type="match status" value="1"/>
</dbReference>
<dbReference type="PANTHER" id="PTHR36918">
    <property type="match status" value="1"/>
</dbReference>
<dbReference type="PANTHER" id="PTHR36918:SF1">
    <property type="entry name" value="PROTEIN-EXPORT PROTEIN SECB"/>
    <property type="match status" value="1"/>
</dbReference>
<dbReference type="Pfam" id="PF02556">
    <property type="entry name" value="SecB"/>
    <property type="match status" value="1"/>
</dbReference>
<dbReference type="SUPFAM" id="SSF54611">
    <property type="entry name" value="SecB-like"/>
    <property type="match status" value="1"/>
</dbReference>
<proteinExistence type="inferred from homology"/>
<protein>
    <recommendedName>
        <fullName evidence="1">Protein-export protein SecB</fullName>
    </recommendedName>
</protein>